<reference key="1">
    <citation type="journal article" date="1989" name="EMBO J.">
        <title>Multiple copies of the coding regions for the light-harvesting B800-850 alpha- and beta-polypeptides are present in the Rhodopseudomonas palustris genome.</title>
        <authorList>
            <person name="Tadros M.H."/>
            <person name="Waterkamp K."/>
        </authorList>
    </citation>
    <scope>NUCLEOTIDE SEQUENCE [GENOMIC DNA]</scope>
    <scope>PROTEIN SEQUENCE OF 2-10</scope>
    <source>
        <strain>1E5</strain>
    </source>
</reference>
<reference key="2">
    <citation type="journal article" date="1993" name="Eur. J. Biochem.">
        <title>Cloning of a new antenna gene cluster and expression analysis of the antenna gene family of Rhodopseudomonas palustris.</title>
        <authorList>
            <person name="Tadros M.H."/>
            <person name="Katsiou E."/>
            <person name="Hoon M.A."/>
            <person name="Yurkova N."/>
            <person name="Ramji D.P."/>
        </authorList>
    </citation>
    <scope>NUCLEOTIDE SEQUENCE [GENOMIC DNA]</scope>
</reference>
<reference key="3">
    <citation type="journal article" date="2004" name="Nat. Biotechnol.">
        <title>Complete genome sequence of the metabolically versatile photosynthetic bacterium Rhodopseudomonas palustris.</title>
        <authorList>
            <person name="Larimer F.W."/>
            <person name="Chain P."/>
            <person name="Hauser L."/>
            <person name="Lamerdin J.E."/>
            <person name="Malfatti S."/>
            <person name="Do L."/>
            <person name="Land M.L."/>
            <person name="Pelletier D.A."/>
            <person name="Beatty J.T."/>
            <person name="Lang A.S."/>
            <person name="Tabita F.R."/>
            <person name="Gibson J.L."/>
            <person name="Hanson T.E."/>
            <person name="Bobst C."/>
            <person name="Torres y Torres J.L."/>
            <person name="Peres C."/>
            <person name="Harrison F.H."/>
            <person name="Gibson J."/>
            <person name="Harwood C.S."/>
        </authorList>
    </citation>
    <scope>NUCLEOTIDE SEQUENCE [LARGE SCALE GENOMIC DNA]</scope>
    <source>
        <strain>ATCC BAA-98 / CGA009</strain>
    </source>
</reference>
<reference key="4">
    <citation type="book" date="1990" name="Current research in photosynthesis">
        <editorList>
            <person name="Baltscheffsky M."/>
        </editorList>
        <authorList>
            <person name="Brunisholz R.A."/>
            <person name="Evans M.B."/>
            <person name="Cogdell R.J."/>
            <person name="Frank G."/>
            <person name="Zuber H."/>
        </authorList>
    </citation>
    <scope>PROTEIN SEQUENCE OF 2-51</scope>
    <source>
        <strain>2.6.1 / French</strain>
    </source>
</reference>
<feature type="initiator methionine" description="Removed" evidence="2 3">
    <location>
        <position position="1"/>
    </location>
</feature>
<feature type="chain" id="PRO_0000099830" description="Light-harvesting protein B-800-850 beta chain B">
    <location>
        <begin position="2"/>
        <end position="51"/>
    </location>
</feature>
<feature type="topological domain" description="Cytoplasmic" evidence="1">
    <location>
        <begin position="2"/>
        <end position="23"/>
    </location>
</feature>
<feature type="transmembrane region" description="Helical" evidence="1">
    <location>
        <begin position="24"/>
        <end position="46"/>
    </location>
</feature>
<feature type="topological domain" description="Periplasmic" evidence="1">
    <location>
        <begin position="47"/>
        <end position="51"/>
    </location>
</feature>
<feature type="binding site" description="axial binding residue" evidence="1">
    <location>
        <position position="22"/>
    </location>
    <ligand>
        <name>a bacteriochlorophyll</name>
        <dbReference type="ChEBI" id="CHEBI:38201"/>
    </ligand>
    <ligandPart>
        <name>Mg</name>
        <dbReference type="ChEBI" id="CHEBI:25107"/>
    </ligandPart>
</feature>
<feature type="binding site" description="axial binding residue" evidence="1">
    <location>
        <position position="40"/>
    </location>
    <ligand>
        <name>a bacteriochlorophyll</name>
        <dbReference type="ChEBI" id="CHEBI:38201"/>
    </ligand>
    <ligandPart>
        <name>Mg</name>
        <dbReference type="ChEBI" id="CHEBI:25107"/>
    </ligandPart>
</feature>
<feature type="helix" evidence="5">
    <location>
        <begin position="15"/>
        <end position="46"/>
    </location>
</feature>
<accession>P35107</accession>
<organism>
    <name type="scientific">Rhodopseudomonas palustris (strain ATCC BAA-98 / CGA009)</name>
    <dbReference type="NCBI Taxonomy" id="258594"/>
    <lineage>
        <taxon>Bacteria</taxon>
        <taxon>Pseudomonadati</taxon>
        <taxon>Pseudomonadota</taxon>
        <taxon>Alphaproteobacteria</taxon>
        <taxon>Hyphomicrobiales</taxon>
        <taxon>Nitrobacteraceae</taxon>
        <taxon>Rhodopseudomonas</taxon>
    </lineage>
</organism>
<comment type="function">
    <text>Antenna complexes are light-harvesting systems, which transfer the excitation energy to the reaction centers.</text>
</comment>
<comment type="subunit">
    <text>The core complex is formed by different alpha and beta chains, binding bacteriochlorophyll molecules, and arranged most probably in tetrameric structures disposed around the reaction center. The non-pigmented gamma chains may constitute additional components.</text>
</comment>
<comment type="subcellular location">
    <subcellularLocation>
        <location>Cell inner membrane</location>
        <topology>Single-pass type II membrane protein</topology>
    </subcellularLocation>
</comment>
<comment type="similarity">
    <text evidence="4">Belongs to the antenna complex beta subunit family.</text>
</comment>
<dbReference type="EMBL" id="X64957">
    <property type="protein sequence ID" value="CAA46119.1"/>
    <property type="molecule type" value="Genomic_DNA"/>
</dbReference>
<dbReference type="EMBL" id="X63347">
    <property type="protein sequence ID" value="CAA44948.1"/>
    <property type="molecule type" value="Genomic_DNA"/>
</dbReference>
<dbReference type="EMBL" id="BX572597">
    <property type="protein sequence ID" value="CAE26933.1"/>
    <property type="molecule type" value="Genomic_DNA"/>
</dbReference>
<dbReference type="EMBL" id="BX572606">
    <property type="protein sequence ID" value="CAE29732.1"/>
    <property type="molecule type" value="Genomic_DNA"/>
</dbReference>
<dbReference type="PIR" id="S39073">
    <property type="entry name" value="S39073"/>
</dbReference>
<dbReference type="PDB" id="7ZDI">
    <property type="method" value="EM"/>
    <property type="resolution" value="2.90 A"/>
    <property type="chains" value="B/D/F/H/J/L/N/P/R=1-51"/>
</dbReference>
<dbReference type="PDB" id="7ZE8">
    <property type="method" value="EM"/>
    <property type="resolution" value="3.60 A"/>
    <property type="chains" value="B/D/F/H/J/L/N/P/R=1-51"/>
</dbReference>
<dbReference type="PDBsum" id="7ZDI"/>
<dbReference type="PDBsum" id="7ZE8"/>
<dbReference type="SMR" id="P35107"/>
<dbReference type="STRING" id="258594.RPA1491"/>
<dbReference type="eggNOG" id="ENOG50331U4">
    <property type="taxonomic scope" value="Bacteria"/>
</dbReference>
<dbReference type="HOGENOM" id="CLU_199082_1_0_5"/>
<dbReference type="PhylomeDB" id="P35107"/>
<dbReference type="GO" id="GO:0005886">
    <property type="term" value="C:plasma membrane"/>
    <property type="evidence" value="ECO:0007669"/>
    <property type="project" value="UniProtKB-SubCell"/>
</dbReference>
<dbReference type="GO" id="GO:0030077">
    <property type="term" value="C:plasma membrane light-harvesting complex"/>
    <property type="evidence" value="ECO:0007669"/>
    <property type="project" value="InterPro"/>
</dbReference>
<dbReference type="GO" id="GO:0042314">
    <property type="term" value="F:bacteriochlorophyll binding"/>
    <property type="evidence" value="ECO:0007669"/>
    <property type="project" value="UniProtKB-KW"/>
</dbReference>
<dbReference type="GO" id="GO:0045156">
    <property type="term" value="F:electron transporter, transferring electrons within the cyclic electron transport pathway of photosynthesis activity"/>
    <property type="evidence" value="ECO:0007669"/>
    <property type="project" value="InterPro"/>
</dbReference>
<dbReference type="GO" id="GO:0046872">
    <property type="term" value="F:metal ion binding"/>
    <property type="evidence" value="ECO:0007669"/>
    <property type="project" value="UniProtKB-KW"/>
</dbReference>
<dbReference type="GO" id="GO:0019684">
    <property type="term" value="P:photosynthesis, light reaction"/>
    <property type="evidence" value="ECO:0007669"/>
    <property type="project" value="InterPro"/>
</dbReference>
<dbReference type="Gene3D" id="1.20.5.250">
    <property type="match status" value="1"/>
</dbReference>
<dbReference type="InterPro" id="IPR000066">
    <property type="entry name" value="Antenna_a/b"/>
</dbReference>
<dbReference type="InterPro" id="IPR023623">
    <property type="entry name" value="Antenna_beta_CS"/>
</dbReference>
<dbReference type="InterPro" id="IPR023624">
    <property type="entry name" value="Antenna_beta_dom_sf"/>
</dbReference>
<dbReference type="InterPro" id="IPR002362">
    <property type="entry name" value="LHB-1/5"/>
</dbReference>
<dbReference type="InterPro" id="IPR035889">
    <property type="entry name" value="Light-harvesting_complex"/>
</dbReference>
<dbReference type="NCBIfam" id="NF040862">
    <property type="entry name" value="pufB_517_ASD"/>
    <property type="match status" value="1"/>
</dbReference>
<dbReference type="Pfam" id="PF00556">
    <property type="entry name" value="LHC"/>
    <property type="match status" value="1"/>
</dbReference>
<dbReference type="PIRSF" id="PIRSF002900">
    <property type="entry name" value="Antenna_beta"/>
    <property type="match status" value="1"/>
</dbReference>
<dbReference type="PRINTS" id="PR00674">
    <property type="entry name" value="LIGHTHARVSTB"/>
</dbReference>
<dbReference type="SUPFAM" id="SSF56918">
    <property type="entry name" value="Light-harvesting complex subunits"/>
    <property type="match status" value="1"/>
</dbReference>
<dbReference type="PROSITE" id="PS00969">
    <property type="entry name" value="ANTENNA_COMP_BETA"/>
    <property type="match status" value="1"/>
</dbReference>
<proteinExistence type="evidence at protein level"/>
<sequence length="51" mass="5732">MADDPNKVWPTGLTIAESEELHKHVIDGTRIFGAIAIVAHFLAYVYSPWLH</sequence>
<gene>
    <name type="primary">pucBB</name>
    <name type="ordered locus">RPA4291</name>
</gene>
<gene>
    <name type="primary">pucBE</name>
    <name type="ordered locus">RPA1491</name>
</gene>
<protein>
    <recommendedName>
        <fullName>Light-harvesting protein B-800-850 beta chain B</fullName>
        <shortName>LH II-B beta</shortName>
    </recommendedName>
    <alternativeName>
        <fullName>Antenna pigment protein beta chain B</fullName>
    </alternativeName>
</protein>
<name>LHB2_RHOPA</name>
<keyword id="KW-0002">3D-structure</keyword>
<keyword id="KW-0042">Antenna complex</keyword>
<keyword id="KW-0076">Bacteriochlorophyll</keyword>
<keyword id="KW-0997">Cell inner membrane</keyword>
<keyword id="KW-1003">Cell membrane</keyword>
<keyword id="KW-0148">Chlorophyll</keyword>
<keyword id="KW-0157">Chromophore</keyword>
<keyword id="KW-0903">Direct protein sequencing</keyword>
<keyword id="KW-0437">Light-harvesting polypeptide</keyword>
<keyword id="KW-0460">Magnesium</keyword>
<keyword id="KW-0472">Membrane</keyword>
<keyword id="KW-0479">Metal-binding</keyword>
<keyword id="KW-0812">Transmembrane</keyword>
<keyword id="KW-1133">Transmembrane helix</keyword>
<evidence type="ECO:0000255" key="1"/>
<evidence type="ECO:0000269" key="2">
    <source>
    </source>
</evidence>
<evidence type="ECO:0000269" key="3">
    <source ref="4"/>
</evidence>
<evidence type="ECO:0000305" key="4"/>
<evidence type="ECO:0007829" key="5">
    <source>
        <dbReference type="PDB" id="7ZDI"/>
    </source>
</evidence>